<protein>
    <recommendedName>
        <fullName evidence="1">7-cyano-7-deazaguanine synthase</fullName>
        <ecNumber evidence="1">6.3.4.20</ecNumber>
    </recommendedName>
    <alternativeName>
        <fullName evidence="1">7-cyano-7-carbaguanine synthase</fullName>
    </alternativeName>
    <alternativeName>
        <fullName evidence="1">PreQ(0) synthase</fullName>
    </alternativeName>
    <alternativeName>
        <fullName evidence="1">Queuosine biosynthesis protein QueC</fullName>
    </alternativeName>
</protein>
<keyword id="KW-0067">ATP-binding</keyword>
<keyword id="KW-0436">Ligase</keyword>
<keyword id="KW-0479">Metal-binding</keyword>
<keyword id="KW-0547">Nucleotide-binding</keyword>
<keyword id="KW-0671">Queuosine biosynthesis</keyword>
<keyword id="KW-0862">Zinc</keyword>
<dbReference type="EC" id="6.3.4.20" evidence="1"/>
<dbReference type="EMBL" id="CP000825">
    <property type="protein sequence ID" value="ABV51577.1"/>
    <property type="molecule type" value="Genomic_DNA"/>
</dbReference>
<dbReference type="RefSeq" id="WP_012008564.1">
    <property type="nucleotide sequence ID" value="NC_009840.1"/>
</dbReference>
<dbReference type="SMR" id="A8G7J6"/>
<dbReference type="STRING" id="93060.P9215_19641"/>
<dbReference type="KEGG" id="pmh:P9215_19641"/>
<dbReference type="eggNOG" id="COG0603">
    <property type="taxonomic scope" value="Bacteria"/>
</dbReference>
<dbReference type="HOGENOM" id="CLU_081854_1_0_3"/>
<dbReference type="OrthoDB" id="9789567at2"/>
<dbReference type="UniPathway" id="UPA00391"/>
<dbReference type="Proteomes" id="UP000002014">
    <property type="component" value="Chromosome"/>
</dbReference>
<dbReference type="GO" id="GO:0005524">
    <property type="term" value="F:ATP binding"/>
    <property type="evidence" value="ECO:0007669"/>
    <property type="project" value="UniProtKB-UniRule"/>
</dbReference>
<dbReference type="GO" id="GO:0016879">
    <property type="term" value="F:ligase activity, forming carbon-nitrogen bonds"/>
    <property type="evidence" value="ECO:0007669"/>
    <property type="project" value="UniProtKB-UniRule"/>
</dbReference>
<dbReference type="GO" id="GO:0008270">
    <property type="term" value="F:zinc ion binding"/>
    <property type="evidence" value="ECO:0007669"/>
    <property type="project" value="UniProtKB-UniRule"/>
</dbReference>
<dbReference type="GO" id="GO:0008616">
    <property type="term" value="P:queuosine biosynthetic process"/>
    <property type="evidence" value="ECO:0007669"/>
    <property type="project" value="UniProtKB-UniRule"/>
</dbReference>
<dbReference type="CDD" id="cd01995">
    <property type="entry name" value="QueC-like"/>
    <property type="match status" value="1"/>
</dbReference>
<dbReference type="Gene3D" id="3.40.50.620">
    <property type="entry name" value="HUPs"/>
    <property type="match status" value="1"/>
</dbReference>
<dbReference type="HAMAP" id="MF_01633">
    <property type="entry name" value="QueC"/>
    <property type="match status" value="1"/>
</dbReference>
<dbReference type="InterPro" id="IPR018317">
    <property type="entry name" value="QueC"/>
</dbReference>
<dbReference type="InterPro" id="IPR014729">
    <property type="entry name" value="Rossmann-like_a/b/a_fold"/>
</dbReference>
<dbReference type="NCBIfam" id="TIGR00364">
    <property type="entry name" value="7-cyano-7-deazaguanine synthase QueC"/>
    <property type="match status" value="1"/>
</dbReference>
<dbReference type="PANTHER" id="PTHR42914">
    <property type="entry name" value="7-CYANO-7-DEAZAGUANINE SYNTHASE"/>
    <property type="match status" value="1"/>
</dbReference>
<dbReference type="PANTHER" id="PTHR42914:SF1">
    <property type="entry name" value="7-CYANO-7-DEAZAGUANINE SYNTHASE"/>
    <property type="match status" value="1"/>
</dbReference>
<dbReference type="Pfam" id="PF06508">
    <property type="entry name" value="QueC"/>
    <property type="match status" value="1"/>
</dbReference>
<dbReference type="PIRSF" id="PIRSF006293">
    <property type="entry name" value="ExsB"/>
    <property type="match status" value="1"/>
</dbReference>
<dbReference type="SUPFAM" id="SSF52402">
    <property type="entry name" value="Adenine nucleotide alpha hydrolases-like"/>
    <property type="match status" value="1"/>
</dbReference>
<name>QUEC_PROM2</name>
<proteinExistence type="inferred from homology"/>
<organism>
    <name type="scientific">Prochlorococcus marinus (strain MIT 9215)</name>
    <dbReference type="NCBI Taxonomy" id="93060"/>
    <lineage>
        <taxon>Bacteria</taxon>
        <taxon>Bacillati</taxon>
        <taxon>Cyanobacteriota</taxon>
        <taxon>Cyanophyceae</taxon>
        <taxon>Synechococcales</taxon>
        <taxon>Prochlorococcaceae</taxon>
        <taxon>Prochlorococcus</taxon>
    </lineage>
</organism>
<sequence>MTLKNKSIVVLLSGGLDSSTVTGIAKKSEAKIFGLSFDYGQRHKKELYSASIIAKHFNIEEFKIIKLDLSLWGGSSLTDTQKNIPLEGVQTNKIPNTYVPGRNTIFISVALSYAEAIDADFIGLGVNALDYSGYPDCRPDYIKKFQELADLANKRGRENNPIKLWTPLLDLNKEEIIKLAYSNHVPLEKTWSCYSGYSKPCGKCDSCRIRNDAYEKWLNNNNKK</sequence>
<feature type="chain" id="PRO_1000069788" description="7-cyano-7-deazaguanine synthase">
    <location>
        <begin position="1"/>
        <end position="224"/>
    </location>
</feature>
<feature type="binding site" evidence="1">
    <location>
        <begin position="12"/>
        <end position="22"/>
    </location>
    <ligand>
        <name>ATP</name>
        <dbReference type="ChEBI" id="CHEBI:30616"/>
    </ligand>
</feature>
<feature type="binding site" evidence="1">
    <location>
        <position position="193"/>
    </location>
    <ligand>
        <name>Zn(2+)</name>
        <dbReference type="ChEBI" id="CHEBI:29105"/>
    </ligand>
</feature>
<feature type="binding site" evidence="1">
    <location>
        <position position="201"/>
    </location>
    <ligand>
        <name>Zn(2+)</name>
        <dbReference type="ChEBI" id="CHEBI:29105"/>
    </ligand>
</feature>
<feature type="binding site" evidence="1">
    <location>
        <position position="204"/>
    </location>
    <ligand>
        <name>Zn(2+)</name>
        <dbReference type="ChEBI" id="CHEBI:29105"/>
    </ligand>
</feature>
<feature type="binding site" evidence="1">
    <location>
        <position position="207"/>
    </location>
    <ligand>
        <name>Zn(2+)</name>
        <dbReference type="ChEBI" id="CHEBI:29105"/>
    </ligand>
</feature>
<evidence type="ECO:0000255" key="1">
    <source>
        <dbReference type="HAMAP-Rule" id="MF_01633"/>
    </source>
</evidence>
<gene>
    <name evidence="1" type="primary">queC</name>
    <name type="ordered locus">P9215_19641</name>
</gene>
<comment type="function">
    <text evidence="1">Catalyzes the ATP-dependent conversion of 7-carboxy-7-deazaguanine (CDG) to 7-cyano-7-deazaguanine (preQ(0)).</text>
</comment>
<comment type="catalytic activity">
    <reaction evidence="1">
        <text>7-carboxy-7-deazaguanine + NH4(+) + ATP = 7-cyano-7-deazaguanine + ADP + phosphate + H2O + H(+)</text>
        <dbReference type="Rhea" id="RHEA:27982"/>
        <dbReference type="ChEBI" id="CHEBI:15377"/>
        <dbReference type="ChEBI" id="CHEBI:15378"/>
        <dbReference type="ChEBI" id="CHEBI:28938"/>
        <dbReference type="ChEBI" id="CHEBI:30616"/>
        <dbReference type="ChEBI" id="CHEBI:43474"/>
        <dbReference type="ChEBI" id="CHEBI:45075"/>
        <dbReference type="ChEBI" id="CHEBI:61036"/>
        <dbReference type="ChEBI" id="CHEBI:456216"/>
        <dbReference type="EC" id="6.3.4.20"/>
    </reaction>
</comment>
<comment type="cofactor">
    <cofactor evidence="1">
        <name>Zn(2+)</name>
        <dbReference type="ChEBI" id="CHEBI:29105"/>
    </cofactor>
    <text evidence="1">Binds 1 zinc ion per subunit.</text>
</comment>
<comment type="pathway">
    <text evidence="1">Purine metabolism; 7-cyano-7-deazaguanine biosynthesis.</text>
</comment>
<comment type="similarity">
    <text evidence="1">Belongs to the QueC family.</text>
</comment>
<accession>A8G7J6</accession>
<reference key="1">
    <citation type="journal article" date="2007" name="PLoS Genet.">
        <title>Patterns and implications of gene gain and loss in the evolution of Prochlorococcus.</title>
        <authorList>
            <person name="Kettler G.C."/>
            <person name="Martiny A.C."/>
            <person name="Huang K."/>
            <person name="Zucker J."/>
            <person name="Coleman M.L."/>
            <person name="Rodrigue S."/>
            <person name="Chen F."/>
            <person name="Lapidus A."/>
            <person name="Ferriera S."/>
            <person name="Johnson J."/>
            <person name="Steglich C."/>
            <person name="Church G.M."/>
            <person name="Richardson P."/>
            <person name="Chisholm S.W."/>
        </authorList>
    </citation>
    <scope>NUCLEOTIDE SEQUENCE [LARGE SCALE GENOMIC DNA]</scope>
    <source>
        <strain>MIT 9215</strain>
    </source>
</reference>